<organism>
    <name type="scientific">Escherichia coli O6:H1 (strain CFT073 / ATCC 700928 / UPEC)</name>
    <dbReference type="NCBI Taxonomy" id="199310"/>
    <lineage>
        <taxon>Bacteria</taxon>
        <taxon>Pseudomonadati</taxon>
        <taxon>Pseudomonadota</taxon>
        <taxon>Gammaproteobacteria</taxon>
        <taxon>Enterobacterales</taxon>
        <taxon>Enterobacteriaceae</taxon>
        <taxon>Escherichia</taxon>
    </lineage>
</organism>
<gene>
    <name type="primary">sanA</name>
    <name type="ordered locus">c2677</name>
</gene>
<accession>P0AFY3</accession>
<accession>P33017</accession>
<accession>P76438</accession>
<keyword id="KW-0997">Cell inner membrane</keyword>
<keyword id="KW-1003">Cell membrane</keyword>
<keyword id="KW-0472">Membrane</keyword>
<keyword id="KW-1185">Reference proteome</keyword>
<keyword id="KW-0812">Transmembrane</keyword>
<keyword id="KW-1133">Transmembrane helix</keyword>
<protein>
    <recommendedName>
        <fullName>Protein SanA</fullName>
    </recommendedName>
</protein>
<dbReference type="EMBL" id="AE014075">
    <property type="protein sequence ID" value="AAN81133.1"/>
    <property type="molecule type" value="Genomic_DNA"/>
</dbReference>
<dbReference type="RefSeq" id="WP_000920064.1">
    <property type="nucleotide sequence ID" value="NZ_CP051263.1"/>
</dbReference>
<dbReference type="STRING" id="199310.c2677"/>
<dbReference type="GeneID" id="75206397"/>
<dbReference type="KEGG" id="ecc:c2677"/>
<dbReference type="eggNOG" id="COG2949">
    <property type="taxonomic scope" value="Bacteria"/>
</dbReference>
<dbReference type="HOGENOM" id="CLU_051474_0_2_6"/>
<dbReference type="BioCyc" id="ECOL199310:C2677-MONOMER"/>
<dbReference type="Proteomes" id="UP000001410">
    <property type="component" value="Chromosome"/>
</dbReference>
<dbReference type="GO" id="GO:0005886">
    <property type="term" value="C:plasma membrane"/>
    <property type="evidence" value="ECO:0007669"/>
    <property type="project" value="UniProtKB-SubCell"/>
</dbReference>
<dbReference type="CDD" id="cd06259">
    <property type="entry name" value="YdcF-like"/>
    <property type="match status" value="1"/>
</dbReference>
<dbReference type="InterPro" id="IPR051599">
    <property type="entry name" value="Cell_Envelope_Assoc"/>
</dbReference>
<dbReference type="InterPro" id="IPR003848">
    <property type="entry name" value="DUF218"/>
</dbReference>
<dbReference type="InterPro" id="IPR023604">
    <property type="entry name" value="Uncharacterised_SanA"/>
</dbReference>
<dbReference type="NCBIfam" id="NF008092">
    <property type="entry name" value="PRK10834.1"/>
    <property type="match status" value="1"/>
</dbReference>
<dbReference type="PANTHER" id="PTHR30336">
    <property type="entry name" value="INNER MEMBRANE PROTEIN, PROBABLE PERMEASE"/>
    <property type="match status" value="1"/>
</dbReference>
<dbReference type="PANTHER" id="PTHR30336:SF0">
    <property type="entry name" value="PROTEIN SANA"/>
    <property type="match status" value="1"/>
</dbReference>
<dbReference type="Pfam" id="PF02698">
    <property type="entry name" value="DUF218"/>
    <property type="match status" value="1"/>
</dbReference>
<dbReference type="PIRSF" id="PIRSF005011">
    <property type="entry name" value="SanA"/>
    <property type="match status" value="1"/>
</dbReference>
<reference key="1">
    <citation type="journal article" date="2002" name="Proc. Natl. Acad. Sci. U.S.A.">
        <title>Extensive mosaic structure revealed by the complete genome sequence of uropathogenic Escherichia coli.</title>
        <authorList>
            <person name="Welch R.A."/>
            <person name="Burland V."/>
            <person name="Plunkett G. III"/>
            <person name="Redford P."/>
            <person name="Roesch P."/>
            <person name="Rasko D."/>
            <person name="Buckles E.L."/>
            <person name="Liou S.-R."/>
            <person name="Boutin A."/>
            <person name="Hackett J."/>
            <person name="Stroud D."/>
            <person name="Mayhew G.F."/>
            <person name="Rose D.J."/>
            <person name="Zhou S."/>
            <person name="Schwartz D.C."/>
            <person name="Perna N.T."/>
            <person name="Mobley H.L.T."/>
            <person name="Donnenberg M.S."/>
            <person name="Blattner F.R."/>
        </authorList>
    </citation>
    <scope>NUCLEOTIDE SEQUENCE [LARGE SCALE GENOMIC DNA]</scope>
    <source>
        <strain>CFT073 / ATCC 700928 / UPEC</strain>
    </source>
</reference>
<proteinExistence type="inferred from homology"/>
<feature type="chain" id="PRO_0000097577" description="Protein SanA">
    <location>
        <begin position="1"/>
        <end position="239"/>
    </location>
</feature>
<feature type="topological domain" description="Cytoplasmic" evidence="2">
    <location>
        <begin position="1"/>
        <end position="6"/>
    </location>
</feature>
<feature type="transmembrane region" description="Helical" evidence="2">
    <location>
        <begin position="7"/>
        <end position="23"/>
    </location>
</feature>
<feature type="topological domain" description="Periplasmic" evidence="2">
    <location>
        <begin position="24"/>
        <end position="239"/>
    </location>
</feature>
<evidence type="ECO:0000250" key="1"/>
<evidence type="ECO:0000255" key="2"/>
<sequence length="239" mass="27287">MLKRVFLSLLVLIGLLLLTVLGLDRWMSWKTAPYIYDELQDLPYRQVGVVLGTAKYYRTGVINQYYRYRIQGAINAYNSGKVNYLLLSGDNALQSYNEPMTMRKDLIAAGVDPSDIVLDYAGFRTLDSIVRTRKVFDTNDFIIITQRFHCERALFIALHMGIQAQCYAVPSPKDMLSVRIREFAARFGALADLYIFKREPRFLGPLVPIPAMHQVPEDAQGYPAVTPEQLLELQKKQGK</sequence>
<name>SANA_ECOL6</name>
<comment type="function">
    <text evidence="1">Participates in the barrier function of the cell envelope.</text>
</comment>
<comment type="subcellular location">
    <subcellularLocation>
        <location evidence="1">Cell inner membrane</location>
        <topology evidence="1">Single-pass membrane protein</topology>
    </subcellularLocation>
</comment>